<reference key="1">
    <citation type="journal article" date="1988" name="Neuron">
        <title>Cloning and expression of the human and rat m5 muscarinic acetylcholine receptor genes.</title>
        <authorList>
            <person name="Bonner T.I."/>
            <person name="Young A.C."/>
            <person name="Brann M.R."/>
            <person name="Buckley N.J."/>
        </authorList>
    </citation>
    <scope>NUCLEOTIDE SEQUENCE</scope>
</reference>
<reference key="2">
    <citation type="journal article" date="1989" name="J. Biol. Chem.">
        <title>Molecular cloning and expression of a fifth muscarinic acetylcholine receptor.</title>
        <authorList>
            <person name="Liao C.-F."/>
            <person name="Themmen A.P.N."/>
            <person name="Joho R."/>
            <person name="Barberis C."/>
            <person name="Birnbaumer M."/>
            <person name="Birnbaumer L."/>
        </authorList>
    </citation>
    <scope>NUCLEOTIDE SEQUENCE [GENOMIC DNA / MRNA]</scope>
</reference>
<reference key="3">
    <citation type="journal article" date="1990" name="J. Biol. Chem.">
        <title>Muscarinic acetylcholine receptors. Peptide sequencing identifies residues involved in antagonist binding and disulfide bond formation.</title>
        <authorList>
            <person name="Kurtenbach E."/>
            <person name="Curtis C.A.M."/>
            <person name="Pedder E.K."/>
            <person name="Aitken A."/>
            <person name="Harris A.C.M."/>
            <person name="Hulme E.C."/>
        </authorList>
    </citation>
    <scope>PROTEIN SEQUENCE OF 66-128</scope>
</reference>
<comment type="function">
    <text>The muscarinic acetylcholine receptor mediates various cellular responses, including inhibition of adenylate cyclase, breakdown of phosphoinositides and modulation of potassium channels through the action of G proteins. Primary transducing effect is Pi turnover.</text>
</comment>
<comment type="subcellular location">
    <subcellularLocation>
        <location>Cell membrane</location>
        <topology>Multi-pass membrane protein</topology>
    </subcellularLocation>
    <subcellularLocation>
        <location>Postsynaptic cell membrane</location>
        <topology>Multi-pass membrane protein</topology>
    </subcellularLocation>
</comment>
<comment type="similarity">
    <text evidence="3">Belongs to the G-protein coupled receptor 1 family. Muscarinic acetylcholine receptor subfamily. CHRM5 sub-subfamily.</text>
</comment>
<protein>
    <recommendedName>
        <fullName>Muscarinic acetylcholine receptor M5</fullName>
    </recommendedName>
</protein>
<organism>
    <name type="scientific">Rattus norvegicus</name>
    <name type="common">Rat</name>
    <dbReference type="NCBI Taxonomy" id="10116"/>
    <lineage>
        <taxon>Eukaryota</taxon>
        <taxon>Metazoa</taxon>
        <taxon>Chordata</taxon>
        <taxon>Craniata</taxon>
        <taxon>Vertebrata</taxon>
        <taxon>Euteleostomi</taxon>
        <taxon>Mammalia</taxon>
        <taxon>Eutheria</taxon>
        <taxon>Euarchontoglires</taxon>
        <taxon>Glires</taxon>
        <taxon>Rodentia</taxon>
        <taxon>Myomorpha</taxon>
        <taxon>Muroidea</taxon>
        <taxon>Muridae</taxon>
        <taxon>Murinae</taxon>
        <taxon>Rattus</taxon>
    </lineage>
</organism>
<dbReference type="EMBL" id="M22926">
    <property type="protein sequence ID" value="AAA40658.1"/>
    <property type="molecule type" value="mRNA"/>
</dbReference>
<dbReference type="EMBL" id="M22925">
    <property type="protein sequence ID" value="AAA41572.1"/>
    <property type="molecule type" value="Genomic_DNA"/>
</dbReference>
<dbReference type="PIR" id="JT0531">
    <property type="entry name" value="JT0531"/>
</dbReference>
<dbReference type="RefSeq" id="NP_059058.1">
    <property type="nucleotide sequence ID" value="NM_017362.5"/>
</dbReference>
<dbReference type="SMR" id="P08911"/>
<dbReference type="FunCoup" id="P08911">
    <property type="interactions" value="165"/>
</dbReference>
<dbReference type="IntAct" id="P08911">
    <property type="interactions" value="3"/>
</dbReference>
<dbReference type="MINT" id="P08911"/>
<dbReference type="STRING" id="10116.ENSRNOP00000008387"/>
<dbReference type="BindingDB" id="P08911"/>
<dbReference type="ChEMBL" id="CHEMBL277"/>
<dbReference type="DrugCentral" id="P08911"/>
<dbReference type="GuidetoPHARMACOLOGY" id="17"/>
<dbReference type="GlyCosmos" id="P08911">
    <property type="glycosylation" value="1 site, No reported glycans"/>
</dbReference>
<dbReference type="GlyGen" id="P08911">
    <property type="glycosylation" value="1 site"/>
</dbReference>
<dbReference type="iPTMnet" id="P08911"/>
<dbReference type="PhosphoSitePlus" id="P08911"/>
<dbReference type="PaxDb" id="10116-ENSRNOP00000008387"/>
<dbReference type="Ensembl" id="ENSRNOT00000008387.7">
    <property type="protein sequence ID" value="ENSRNOP00000008387.4"/>
    <property type="gene ID" value="ENSRNOG00000006397.7"/>
</dbReference>
<dbReference type="GeneID" id="53949"/>
<dbReference type="KEGG" id="rno:53949"/>
<dbReference type="UCSC" id="RGD:620027">
    <property type="organism name" value="rat"/>
</dbReference>
<dbReference type="AGR" id="RGD:620027"/>
<dbReference type="CTD" id="1133"/>
<dbReference type="RGD" id="620027">
    <property type="gene designation" value="Chrm5"/>
</dbReference>
<dbReference type="eggNOG" id="KOG4220">
    <property type="taxonomic scope" value="Eukaryota"/>
</dbReference>
<dbReference type="GeneTree" id="ENSGT00940000158450"/>
<dbReference type="HOGENOM" id="CLU_009579_11_2_1"/>
<dbReference type="InParanoid" id="P08911"/>
<dbReference type="OMA" id="IPVTLWH"/>
<dbReference type="OrthoDB" id="10071887at2759"/>
<dbReference type="PhylomeDB" id="P08911"/>
<dbReference type="TreeFam" id="TF320495"/>
<dbReference type="Reactome" id="R-RNO-390648">
    <property type="pathway name" value="Muscarinic acetylcholine receptors"/>
</dbReference>
<dbReference type="Reactome" id="R-RNO-416476">
    <property type="pathway name" value="G alpha (q) signalling events"/>
</dbReference>
<dbReference type="PRO" id="PR:P08911"/>
<dbReference type="Proteomes" id="UP000002494">
    <property type="component" value="Chromosome 3"/>
</dbReference>
<dbReference type="Bgee" id="ENSRNOG00000006397">
    <property type="expression patterns" value="Expressed in brain"/>
</dbReference>
<dbReference type="GO" id="GO:0030425">
    <property type="term" value="C:dendrite"/>
    <property type="evidence" value="ECO:0000318"/>
    <property type="project" value="GO_Central"/>
</dbReference>
<dbReference type="GO" id="GO:0005886">
    <property type="term" value="C:plasma membrane"/>
    <property type="evidence" value="ECO:0000318"/>
    <property type="project" value="GO_Central"/>
</dbReference>
<dbReference type="GO" id="GO:0045211">
    <property type="term" value="C:postsynaptic membrane"/>
    <property type="evidence" value="ECO:0007669"/>
    <property type="project" value="UniProtKB-SubCell"/>
</dbReference>
<dbReference type="GO" id="GO:0045202">
    <property type="term" value="C:synapse"/>
    <property type="evidence" value="ECO:0000318"/>
    <property type="project" value="GO_Central"/>
</dbReference>
<dbReference type="GO" id="GO:0016907">
    <property type="term" value="F:G protein-coupled acetylcholine receptor activity"/>
    <property type="evidence" value="ECO:0000314"/>
    <property type="project" value="RGD"/>
</dbReference>
<dbReference type="GO" id="GO:0007197">
    <property type="term" value="P:adenylate cyclase-inhibiting G protein-coupled acetylcholine receptor signaling pathway"/>
    <property type="evidence" value="ECO:0000318"/>
    <property type="project" value="GO_Central"/>
</dbReference>
<dbReference type="GO" id="GO:0007268">
    <property type="term" value="P:chemical synaptic transmission"/>
    <property type="evidence" value="ECO:0000318"/>
    <property type="project" value="GO_Central"/>
</dbReference>
<dbReference type="GO" id="GO:0015872">
    <property type="term" value="P:dopamine transport"/>
    <property type="evidence" value="ECO:0000266"/>
    <property type="project" value="RGD"/>
</dbReference>
<dbReference type="GO" id="GO:0007187">
    <property type="term" value="P:G protein-coupled receptor signaling pathway, coupled to cyclic nucleotide second messenger"/>
    <property type="evidence" value="ECO:0000318"/>
    <property type="project" value="GO_Central"/>
</dbReference>
<dbReference type="GO" id="GO:0001696">
    <property type="term" value="P:gastric acid secretion"/>
    <property type="evidence" value="ECO:0007669"/>
    <property type="project" value="InterPro"/>
</dbReference>
<dbReference type="GO" id="GO:0060304">
    <property type="term" value="P:regulation of phosphatidylinositol dephosphorylation"/>
    <property type="evidence" value="ECO:0000315"/>
    <property type="project" value="RGD"/>
</dbReference>
<dbReference type="GO" id="GO:0019226">
    <property type="term" value="P:transmission of nerve impulse"/>
    <property type="evidence" value="ECO:0000266"/>
    <property type="project" value="RGD"/>
</dbReference>
<dbReference type="FunFam" id="1.20.1070.10:FF:000047">
    <property type="entry name" value="Muscarinic acetylcholine receptor"/>
    <property type="match status" value="1"/>
</dbReference>
<dbReference type="FunFam" id="1.20.1070.10:FF:000164">
    <property type="entry name" value="Muscarinic acetylcholine receptor"/>
    <property type="match status" value="1"/>
</dbReference>
<dbReference type="Gene3D" id="1.20.1070.10">
    <property type="entry name" value="Rhodopsin 7-helix transmembrane proteins"/>
    <property type="match status" value="2"/>
</dbReference>
<dbReference type="InterPro" id="IPR000276">
    <property type="entry name" value="GPCR_Rhodpsn"/>
</dbReference>
<dbReference type="InterPro" id="IPR017452">
    <property type="entry name" value="GPCR_Rhodpsn_7TM"/>
</dbReference>
<dbReference type="InterPro" id="IPR000502">
    <property type="entry name" value="Musac_Ach_M5_rcpt"/>
</dbReference>
<dbReference type="InterPro" id="IPR000995">
    <property type="entry name" value="Musac_Ach_rcpt"/>
</dbReference>
<dbReference type="PANTHER" id="PTHR24247">
    <property type="entry name" value="5-HYDROXYTRYPTAMINE RECEPTOR"/>
    <property type="match status" value="1"/>
</dbReference>
<dbReference type="PANTHER" id="PTHR24247:SF209">
    <property type="entry name" value="MUSCARINIC ACETYLCHOLINE RECEPTOR M5"/>
    <property type="match status" value="1"/>
</dbReference>
<dbReference type="Pfam" id="PF00001">
    <property type="entry name" value="7tm_1"/>
    <property type="match status" value="1"/>
</dbReference>
<dbReference type="PRINTS" id="PR00237">
    <property type="entry name" value="GPCRRHODOPSN"/>
</dbReference>
<dbReference type="PRINTS" id="PR00243">
    <property type="entry name" value="MUSCARINICR"/>
</dbReference>
<dbReference type="PRINTS" id="PR00542">
    <property type="entry name" value="MUSCRINICM5R"/>
</dbReference>
<dbReference type="SUPFAM" id="SSF81321">
    <property type="entry name" value="Family A G protein-coupled receptor-like"/>
    <property type="match status" value="1"/>
</dbReference>
<dbReference type="PROSITE" id="PS00237">
    <property type="entry name" value="G_PROTEIN_RECEP_F1_1"/>
    <property type="match status" value="1"/>
</dbReference>
<dbReference type="PROSITE" id="PS50262">
    <property type="entry name" value="G_PROTEIN_RECEP_F1_2"/>
    <property type="match status" value="1"/>
</dbReference>
<proteinExistence type="evidence at protein level"/>
<name>ACM5_RAT</name>
<keyword id="KW-1003">Cell membrane</keyword>
<keyword id="KW-0903">Direct protein sequencing</keyword>
<keyword id="KW-1015">Disulfide bond</keyword>
<keyword id="KW-0297">G-protein coupled receptor</keyword>
<keyword id="KW-0325">Glycoprotein</keyword>
<keyword id="KW-0472">Membrane</keyword>
<keyword id="KW-0597">Phosphoprotein</keyword>
<keyword id="KW-0628">Postsynaptic cell membrane</keyword>
<keyword id="KW-0675">Receptor</keyword>
<keyword id="KW-1185">Reference proteome</keyword>
<keyword id="KW-0770">Synapse</keyword>
<keyword id="KW-0807">Transducer</keyword>
<keyword id="KW-0812">Transmembrane</keyword>
<keyword id="KW-1133">Transmembrane helix</keyword>
<gene>
    <name type="primary">Chrm5</name>
    <name type="synonym">Chrm-5</name>
</gene>
<evidence type="ECO:0000250" key="1"/>
<evidence type="ECO:0000255" key="2"/>
<evidence type="ECO:0000255" key="3">
    <source>
        <dbReference type="PROSITE-ProRule" id="PRU00521"/>
    </source>
</evidence>
<evidence type="ECO:0000256" key="4">
    <source>
        <dbReference type="SAM" id="MobiDB-lite"/>
    </source>
</evidence>
<accession>P08911</accession>
<feature type="chain" id="PRO_0000069046" description="Muscarinic acetylcholine receptor M5">
    <location>
        <begin position="1"/>
        <end position="531"/>
    </location>
</feature>
<feature type="topological domain" description="Extracellular" evidence="1">
    <location>
        <begin position="1"/>
        <end position="28"/>
    </location>
</feature>
<feature type="transmembrane region" description="Helical; Name=1" evidence="1">
    <location>
        <begin position="29"/>
        <end position="52"/>
    </location>
</feature>
<feature type="topological domain" description="Cytoplasmic" evidence="1">
    <location>
        <begin position="53"/>
        <end position="65"/>
    </location>
</feature>
<feature type="transmembrane region" description="Helical; Name=2" evidence="1">
    <location>
        <begin position="66"/>
        <end position="86"/>
    </location>
</feature>
<feature type="topological domain" description="Extracellular" evidence="1">
    <location>
        <begin position="87"/>
        <end position="103"/>
    </location>
</feature>
<feature type="transmembrane region" description="Helical; Name=3" evidence="1">
    <location>
        <begin position="104"/>
        <end position="125"/>
    </location>
</feature>
<feature type="topological domain" description="Cytoplasmic" evidence="1">
    <location>
        <begin position="126"/>
        <end position="145"/>
    </location>
</feature>
<feature type="transmembrane region" description="Helical; Name=4" evidence="1">
    <location>
        <begin position="146"/>
        <end position="168"/>
    </location>
</feature>
<feature type="topological domain" description="Extracellular" evidence="1">
    <location>
        <begin position="169"/>
        <end position="190"/>
    </location>
</feature>
<feature type="transmembrane region" description="Helical; Name=5" evidence="1">
    <location>
        <begin position="191"/>
        <end position="213"/>
    </location>
</feature>
<feature type="topological domain" description="Cytoplasmic" evidence="1">
    <location>
        <begin position="214"/>
        <end position="442"/>
    </location>
</feature>
<feature type="transmembrane region" description="Helical; Name=6" evidence="1">
    <location>
        <begin position="443"/>
        <end position="463"/>
    </location>
</feature>
<feature type="topological domain" description="Extracellular" evidence="1">
    <location>
        <begin position="464"/>
        <end position="477"/>
    </location>
</feature>
<feature type="transmembrane region" description="Helical; Name=7" evidence="1">
    <location>
        <begin position="478"/>
        <end position="497"/>
    </location>
</feature>
<feature type="topological domain" description="Cytoplasmic" evidence="1">
    <location>
        <begin position="498"/>
        <end position="531"/>
    </location>
</feature>
<feature type="region of interest" description="Disordered" evidence="4">
    <location>
        <begin position="259"/>
        <end position="295"/>
    </location>
</feature>
<feature type="region of interest" description="Disordered" evidence="4">
    <location>
        <begin position="327"/>
        <end position="346"/>
    </location>
</feature>
<feature type="compositionally biased region" description="Low complexity" evidence="4">
    <location>
        <begin position="267"/>
        <end position="287"/>
    </location>
</feature>
<feature type="compositionally biased region" description="Polar residues" evidence="4">
    <location>
        <begin position="334"/>
        <end position="346"/>
    </location>
</feature>
<feature type="modified residue" description="Phosphothreonine" evidence="2">
    <location>
        <position position="500"/>
    </location>
</feature>
<feature type="modified residue" description="Phosphothreonine" evidence="2">
    <location>
        <position position="504"/>
    </location>
</feature>
<feature type="glycosylation site" description="N-linked (GlcNAc...) asparagine" evidence="2">
    <location>
        <position position="7"/>
    </location>
</feature>
<feature type="disulfide bond" evidence="3">
    <location>
        <begin position="102"/>
        <end position="182"/>
    </location>
</feature>
<sequence>MEGESYNESTVNGTPVNHQALERHGLWEVITIAVVTAVVSLMTIVGNVLVMISFKVNSQLKTVNNYYLLSLACADLIIGIFSMNLYTTYILMGRWVLGSLACDLWLALDYVASNASVMNLLVISFDRYFSITRPLTYRAKRTPKRAGIMIGLAWLVSFILWAPAILCWQYLVGKRTVPPDECQIQFLSEPTITFGTAIAAFYIPVSVMTILYCRIYRETEKRTKDLADLQGSDSVAEAKKREPAQRTLLRSFFSCPRPSLAQRERNQASWSSSRRSTSTTGKTTQATDLSADWEKAEQVTTCSSYPSSEDEAKPTTDPVFQMVYKSEAKESPGKESNTQETKETVVNTRTENSDYDTPKYFLSPAAAHRLKSQKCVAYKFRLVVKADGTQETNNGCRKVKIMPCSFPVSKDPSTKGPDPNLSHQMTKRKRMVLVKERKAAQTLSAILLAFIITWTPYNIMVLVSTFCDKCVPVTLWHLGYWLCYVNSTINPICYALCNRTFRKTFKLLLLCRWKKKKVEEKLYWQGNSKLP</sequence>